<reference key="1">
    <citation type="journal article" date="2003" name="J. Bacteriol.">
        <title>Comparative analyses of the complete genome sequences of Pierce's disease and citrus variegated chlorosis strains of Xylella fastidiosa.</title>
        <authorList>
            <person name="Van Sluys M.A."/>
            <person name="de Oliveira M.C."/>
            <person name="Monteiro-Vitorello C.B."/>
            <person name="Miyaki C.Y."/>
            <person name="Furlan L.R."/>
            <person name="Camargo L.E.A."/>
            <person name="da Silva A.C.R."/>
            <person name="Moon D.H."/>
            <person name="Takita M.A."/>
            <person name="Lemos E.G.M."/>
            <person name="Machado M.A."/>
            <person name="Ferro M.I.T."/>
            <person name="da Silva F.R."/>
            <person name="Goldman M.H.S."/>
            <person name="Goldman G.H."/>
            <person name="Lemos M.V.F."/>
            <person name="El-Dorry H."/>
            <person name="Tsai S.M."/>
            <person name="Carrer H."/>
            <person name="Carraro D.M."/>
            <person name="de Oliveira R.C."/>
            <person name="Nunes L.R."/>
            <person name="Siqueira W.J."/>
            <person name="Coutinho L.L."/>
            <person name="Kimura E.T."/>
            <person name="Ferro E.S."/>
            <person name="Harakava R."/>
            <person name="Kuramae E.E."/>
            <person name="Marino C.L."/>
            <person name="Giglioti E."/>
            <person name="Abreu I.L."/>
            <person name="Alves L.M.C."/>
            <person name="do Amaral A.M."/>
            <person name="Baia G.S."/>
            <person name="Blanco S.R."/>
            <person name="Brito M.S."/>
            <person name="Cannavan F.S."/>
            <person name="Celestino A.V."/>
            <person name="da Cunha A.F."/>
            <person name="Fenille R.C."/>
            <person name="Ferro J.A."/>
            <person name="Formighieri E.F."/>
            <person name="Kishi L.T."/>
            <person name="Leoni S.G."/>
            <person name="Oliveira A.R."/>
            <person name="Rosa V.E. Jr."/>
            <person name="Sassaki F.T."/>
            <person name="Sena J.A.D."/>
            <person name="de Souza A.A."/>
            <person name="Truffi D."/>
            <person name="Tsukumo F."/>
            <person name="Yanai G.M."/>
            <person name="Zaros L.G."/>
            <person name="Civerolo E.L."/>
            <person name="Simpson A.J.G."/>
            <person name="Almeida N.F. Jr."/>
            <person name="Setubal J.C."/>
            <person name="Kitajima J.P."/>
        </authorList>
    </citation>
    <scope>NUCLEOTIDE SEQUENCE [LARGE SCALE GENOMIC DNA]</scope>
    <source>
        <strain>Temecula1 / ATCC 700964</strain>
    </source>
</reference>
<feature type="chain" id="PRO_0000209192" description="Protein Smg homolog">
    <location>
        <begin position="1"/>
        <end position="157"/>
    </location>
</feature>
<protein>
    <recommendedName>
        <fullName evidence="1">Protein Smg homolog</fullName>
    </recommendedName>
</protein>
<evidence type="ECO:0000255" key="1">
    <source>
        <dbReference type="HAMAP-Rule" id="MF_00598"/>
    </source>
</evidence>
<proteinExistence type="inferred from homology"/>
<keyword id="KW-1185">Reference proteome</keyword>
<sequence>MKESILAVLLYLFEYYFSENADLVRDRDSLQNSLIQVGFSPAEINKAFEWLDALAANRPTLTNPRVNGPVRVLHGPELDKLDVESRGFLLFLEQQGILNTEQRELVLDRAMALDQEELDLDDMKWVVLMVLFNQPGAEAAYAWMETQMFGNEPEQLH</sequence>
<organism>
    <name type="scientific">Xylella fastidiosa (strain Temecula1 / ATCC 700964)</name>
    <dbReference type="NCBI Taxonomy" id="183190"/>
    <lineage>
        <taxon>Bacteria</taxon>
        <taxon>Pseudomonadati</taxon>
        <taxon>Pseudomonadota</taxon>
        <taxon>Gammaproteobacteria</taxon>
        <taxon>Lysobacterales</taxon>
        <taxon>Lysobacteraceae</taxon>
        <taxon>Xylella</taxon>
    </lineage>
</organism>
<gene>
    <name evidence="1" type="primary">smg</name>
    <name type="ordered locus">PD_1766</name>
</gene>
<comment type="similarity">
    <text evidence="1">Belongs to the Smg family.</text>
</comment>
<accession>Q87AQ7</accession>
<name>SMG_XYLFT</name>
<dbReference type="EMBL" id="AE009442">
    <property type="protein sequence ID" value="AAO29600.1"/>
    <property type="molecule type" value="Genomic_DNA"/>
</dbReference>
<dbReference type="RefSeq" id="WP_004089636.1">
    <property type="nucleotide sequence ID" value="NC_004556.1"/>
</dbReference>
<dbReference type="SMR" id="Q87AQ7"/>
<dbReference type="KEGG" id="xft:PD_1766"/>
<dbReference type="HOGENOM" id="CLU_133242_0_0_6"/>
<dbReference type="Proteomes" id="UP000002516">
    <property type="component" value="Chromosome"/>
</dbReference>
<dbReference type="HAMAP" id="MF_00598">
    <property type="entry name" value="Smg"/>
    <property type="match status" value="1"/>
</dbReference>
<dbReference type="InterPro" id="IPR007456">
    <property type="entry name" value="Smg"/>
</dbReference>
<dbReference type="NCBIfam" id="NF002897">
    <property type="entry name" value="PRK03430.1"/>
    <property type="match status" value="1"/>
</dbReference>
<dbReference type="PANTHER" id="PTHR38692">
    <property type="entry name" value="PROTEIN SMG"/>
    <property type="match status" value="1"/>
</dbReference>
<dbReference type="PANTHER" id="PTHR38692:SF1">
    <property type="entry name" value="PROTEIN SMG"/>
    <property type="match status" value="1"/>
</dbReference>
<dbReference type="Pfam" id="PF04361">
    <property type="entry name" value="DUF494"/>
    <property type="match status" value="1"/>
</dbReference>